<keyword id="KW-0044">Antibiotic</keyword>
<keyword id="KW-0929">Antimicrobial</keyword>
<keyword id="KW-0903">Direct protein sequencing</keyword>
<keyword id="KW-0964">Secreted</keyword>
<keyword id="KW-0800">Toxin</keyword>
<evidence type="ECO:0000269" key="1">
    <source>
    </source>
</evidence>
<evidence type="ECO:0000303" key="2">
    <source>
    </source>
</evidence>
<evidence type="ECO:0000305" key="3"/>
<evidence type="ECO:0000305" key="4">
    <source>
    </source>
</evidence>
<sequence length="79" mass="8796">KSKWGKLWGKAKGVAKKGAKKVKKALLKALKKKLAKEMAKSKGVDYKEMKAKVMAMDKAKVLQEAMKILGKKAMDKYLS</sequence>
<feature type="peptide" id="PRO_0000437251" description="Cytoinsectotoxin-3" evidence="1">
    <location>
        <begin position="1"/>
        <end position="79"/>
    </location>
</feature>
<reference evidence="3" key="1">
    <citation type="journal article" date="2016" name="Biochem. J.">
        <title>Lachesana tarabaevi, an expert in membrane-active toxins.</title>
        <authorList>
            <person name="Kuzmenkov A.I."/>
            <person name="Sachkova M.Y."/>
            <person name="Kovalchuk S.I."/>
            <person name="Grishin E.V."/>
            <person name="Vassilevski A.A."/>
        </authorList>
    </citation>
    <scope>PROTEIN SEQUENCE</scope>
    <scope>FUNCTION</scope>
    <scope>SUBCELLULAR LOCATION</scope>
    <scope>MASS SPECTROMETRY</scope>
    <scope>TOXIC DOSE</scope>
    <source>
        <tissue evidence="2">Venom</tissue>
    </source>
</reference>
<proteinExistence type="evidence at protein level"/>
<accession>C0HJV5</accession>
<protein>
    <recommendedName>
        <fullName evidence="2">Cytoinsectotoxin-3</fullName>
        <shortName evidence="2">CIT-3</shortName>
    </recommendedName>
</protein>
<name>CTX3_LACTA</name>
<comment type="function">
    <text evidence="1">Insecticidal and antimicrobial peptide. Has insecticidal activity against larvae of flesh fly S.carnaria. Has antibacterial activity against Gram-positive bacterium B.subtilis B-501 (MIC=0.63 uM) and Gram-negative bacterium E.coli DH5alpha (MIC=2.5 uM).</text>
</comment>
<comment type="subcellular location">
    <subcellularLocation>
        <location evidence="1">Secreted</location>
    </subcellularLocation>
</comment>
<comment type="tissue specificity">
    <text evidence="4">Expressed by the venom gland.</text>
</comment>
<comment type="domain">
    <text evidence="4">The mature peptide may form alpha-helices which disrupt target cell membranes.</text>
</comment>
<comment type="mass spectrometry" mass="8796.4" method="MALDI" evidence="1"/>
<comment type="toxic dose">
    <text evidence="1">LD(50) is 66 ug/g in larvae of flesh fly S.carnaria.</text>
</comment>
<comment type="similarity">
    <text evidence="3">Belongs to the cationic peptide 06 (cytoinsectotoxin) family.</text>
</comment>
<dbReference type="SMR" id="C0HJV5"/>
<dbReference type="GO" id="GO:0005576">
    <property type="term" value="C:extracellular region"/>
    <property type="evidence" value="ECO:0007669"/>
    <property type="project" value="UniProtKB-SubCell"/>
</dbReference>
<dbReference type="GO" id="GO:0090729">
    <property type="term" value="F:toxin activity"/>
    <property type="evidence" value="ECO:0007669"/>
    <property type="project" value="UniProtKB-KW"/>
</dbReference>
<dbReference type="GO" id="GO:0042742">
    <property type="term" value="P:defense response to bacterium"/>
    <property type="evidence" value="ECO:0007669"/>
    <property type="project" value="UniProtKB-KW"/>
</dbReference>
<organism evidence="2">
    <name type="scientific">Lachesana tarabaevi</name>
    <name type="common">Spider</name>
    <dbReference type="NCBI Taxonomy" id="379576"/>
    <lineage>
        <taxon>Eukaryota</taxon>
        <taxon>Metazoa</taxon>
        <taxon>Ecdysozoa</taxon>
        <taxon>Arthropoda</taxon>
        <taxon>Chelicerata</taxon>
        <taxon>Arachnida</taxon>
        <taxon>Araneae</taxon>
        <taxon>Araneomorphae</taxon>
        <taxon>Entelegynae</taxon>
        <taxon>Entelegynae incertae sedis</taxon>
        <taxon>Zodariidae</taxon>
        <taxon>Lachesana</taxon>
    </lineage>
</organism>